<comment type="function">
    <text evidence="1">One of the early assembly proteins it binds 23S rRNA. One of the proteins that surrounds the polypeptide exit tunnel on the outside of the ribosome. Forms the main docking site for trigger factor binding to the ribosome.</text>
</comment>
<comment type="subunit">
    <text evidence="1">Part of the 50S ribosomal subunit. Contacts protein L29, and trigger factor when it is bound to the ribosome.</text>
</comment>
<comment type="similarity">
    <text evidence="1">Belongs to the universal ribosomal protein uL23 family.</text>
</comment>
<evidence type="ECO:0000255" key="1">
    <source>
        <dbReference type="HAMAP-Rule" id="MF_01369"/>
    </source>
</evidence>
<evidence type="ECO:0000305" key="2"/>
<feature type="chain" id="PRO_1000144597" description="Large ribosomal subunit protein uL23">
    <location>
        <begin position="1"/>
        <end position="104"/>
    </location>
</feature>
<name>RL23_POLNS</name>
<accession>B1XSQ3</accession>
<organism>
    <name type="scientific">Polynucleobacter necessarius subsp. necessarius (strain STIR1)</name>
    <dbReference type="NCBI Taxonomy" id="452638"/>
    <lineage>
        <taxon>Bacteria</taxon>
        <taxon>Pseudomonadati</taxon>
        <taxon>Pseudomonadota</taxon>
        <taxon>Betaproteobacteria</taxon>
        <taxon>Burkholderiales</taxon>
        <taxon>Burkholderiaceae</taxon>
        <taxon>Polynucleobacter</taxon>
    </lineage>
</organism>
<keyword id="KW-0687">Ribonucleoprotein</keyword>
<keyword id="KW-0689">Ribosomal protein</keyword>
<keyword id="KW-0694">RNA-binding</keyword>
<keyword id="KW-0699">rRNA-binding</keyword>
<dbReference type="EMBL" id="CP001010">
    <property type="protein sequence ID" value="ACB43380.1"/>
    <property type="molecule type" value="Genomic_DNA"/>
</dbReference>
<dbReference type="SMR" id="B1XSQ3"/>
<dbReference type="STRING" id="452638.Pnec_0052"/>
<dbReference type="KEGG" id="pne:Pnec_0052"/>
<dbReference type="eggNOG" id="COG0089">
    <property type="taxonomic scope" value="Bacteria"/>
</dbReference>
<dbReference type="HOGENOM" id="CLU_037562_3_1_4"/>
<dbReference type="OrthoDB" id="9793353at2"/>
<dbReference type="GO" id="GO:1990904">
    <property type="term" value="C:ribonucleoprotein complex"/>
    <property type="evidence" value="ECO:0007669"/>
    <property type="project" value="UniProtKB-KW"/>
</dbReference>
<dbReference type="GO" id="GO:0005840">
    <property type="term" value="C:ribosome"/>
    <property type="evidence" value="ECO:0007669"/>
    <property type="project" value="UniProtKB-KW"/>
</dbReference>
<dbReference type="GO" id="GO:0019843">
    <property type="term" value="F:rRNA binding"/>
    <property type="evidence" value="ECO:0007669"/>
    <property type="project" value="UniProtKB-UniRule"/>
</dbReference>
<dbReference type="GO" id="GO:0003735">
    <property type="term" value="F:structural constituent of ribosome"/>
    <property type="evidence" value="ECO:0007669"/>
    <property type="project" value="InterPro"/>
</dbReference>
<dbReference type="GO" id="GO:0006412">
    <property type="term" value="P:translation"/>
    <property type="evidence" value="ECO:0007669"/>
    <property type="project" value="UniProtKB-UniRule"/>
</dbReference>
<dbReference type="FunFam" id="3.30.70.330:FF:000001">
    <property type="entry name" value="50S ribosomal protein L23"/>
    <property type="match status" value="1"/>
</dbReference>
<dbReference type="Gene3D" id="3.30.70.330">
    <property type="match status" value="1"/>
</dbReference>
<dbReference type="HAMAP" id="MF_01369_B">
    <property type="entry name" value="Ribosomal_uL23_B"/>
    <property type="match status" value="1"/>
</dbReference>
<dbReference type="InterPro" id="IPR012677">
    <property type="entry name" value="Nucleotide-bd_a/b_plait_sf"/>
</dbReference>
<dbReference type="InterPro" id="IPR013025">
    <property type="entry name" value="Ribosomal_uL23-like"/>
</dbReference>
<dbReference type="InterPro" id="IPR012678">
    <property type="entry name" value="Ribosomal_uL23/eL15/eS24_sf"/>
</dbReference>
<dbReference type="NCBIfam" id="NF004359">
    <property type="entry name" value="PRK05738.1-3"/>
    <property type="match status" value="1"/>
</dbReference>
<dbReference type="NCBIfam" id="NF004363">
    <property type="entry name" value="PRK05738.2-4"/>
    <property type="match status" value="1"/>
</dbReference>
<dbReference type="PANTHER" id="PTHR11620">
    <property type="entry name" value="60S RIBOSOMAL PROTEIN L23A"/>
    <property type="match status" value="1"/>
</dbReference>
<dbReference type="Pfam" id="PF00276">
    <property type="entry name" value="Ribosomal_L23"/>
    <property type="match status" value="1"/>
</dbReference>
<dbReference type="SUPFAM" id="SSF54189">
    <property type="entry name" value="Ribosomal proteins S24e, L23 and L15e"/>
    <property type="match status" value="1"/>
</dbReference>
<sequence length="104" mass="11826">MSQVRKNDHNLMKVLLGPVISEKATMVAEKNEQVVFQVARDANKSDVKQAVELLFKVQVDSVQIVNQKGKPKRYGRFEGRRDHTKKAYVNLKPGQEISFEAEAN</sequence>
<gene>
    <name evidence="1" type="primary">rplW</name>
    <name type="ordered locus">Pnec_0052</name>
</gene>
<proteinExistence type="inferred from homology"/>
<protein>
    <recommendedName>
        <fullName evidence="1">Large ribosomal subunit protein uL23</fullName>
    </recommendedName>
    <alternativeName>
        <fullName evidence="2">50S ribosomal protein L23</fullName>
    </alternativeName>
</protein>
<reference key="1">
    <citation type="journal article" date="2013" name="Proc. Natl. Acad. Sci. U.S.A.">
        <title>Polynucleobacter necessarius, a model for genome reduction in both free-living and symbiotic bacteria.</title>
        <authorList>
            <person name="Boscaro V."/>
            <person name="Felletti M."/>
            <person name="Vannini C."/>
            <person name="Ackerman M.S."/>
            <person name="Chain P.S."/>
            <person name="Malfatti S."/>
            <person name="Vergez L.M."/>
            <person name="Shin M."/>
            <person name="Doak T.G."/>
            <person name="Lynch M."/>
            <person name="Petroni G."/>
        </authorList>
    </citation>
    <scope>NUCLEOTIDE SEQUENCE [LARGE SCALE GENOMIC DNA]</scope>
    <source>
        <strain>STIR1</strain>
    </source>
</reference>